<name>CLPX_PASMU</name>
<gene>
    <name evidence="1" type="primary">clpX</name>
    <name type="ordered locus">PM1977</name>
</gene>
<sequence length="411" mass="45252">MEKDTELHCSFCGKEQKHVSKLIAGTSGYICNECIELCHDMLLSDAVETPEVESTEQQKLPTPHEIRAHLDDYVIGQDYAKKVLSVAVYNHYKRLRSDKQITDVELGKSNILLIGPTGSGKTLLAETMARMLNVPFAMADATTLTEAGYVGEDVENVLQKLVQSCDYDVERAEQGIIYIDEIDKITRKSENPSITRDVSGEGVQQALLKLIEGTVASIPPQGGRKHPQQEMLRVDTSKILFICGGAFAGLDKVIEKRVHVGSGIGFSAEVKSKQDKATLSQLFEQVEPDDLMKFGLIPEFIGRLPVVAPLAELDEEALVKILTEPKNALIKQYQALFSLEDVALEFSPEALTAMAKKALARKTGARGLRSIVEAILLDTMYDLPSLQHLEKVIVEASTITDNQPPTLVYKA</sequence>
<dbReference type="EMBL" id="AE004439">
    <property type="protein sequence ID" value="AAK04061.1"/>
    <property type="molecule type" value="Genomic_DNA"/>
</dbReference>
<dbReference type="RefSeq" id="WP_005719489.1">
    <property type="nucleotide sequence ID" value="NC_002663.1"/>
</dbReference>
<dbReference type="SMR" id="P57981"/>
<dbReference type="STRING" id="272843.PM1977"/>
<dbReference type="EnsemblBacteria" id="AAK04061">
    <property type="protein sequence ID" value="AAK04061"/>
    <property type="gene ID" value="PM1977"/>
</dbReference>
<dbReference type="KEGG" id="pmu:PM1977"/>
<dbReference type="HOGENOM" id="CLU_014218_8_2_6"/>
<dbReference type="OrthoDB" id="9804062at2"/>
<dbReference type="Proteomes" id="UP000000809">
    <property type="component" value="Chromosome"/>
</dbReference>
<dbReference type="GO" id="GO:0009376">
    <property type="term" value="C:HslUV protease complex"/>
    <property type="evidence" value="ECO:0007669"/>
    <property type="project" value="TreeGrafter"/>
</dbReference>
<dbReference type="GO" id="GO:0005524">
    <property type="term" value="F:ATP binding"/>
    <property type="evidence" value="ECO:0007669"/>
    <property type="project" value="UniProtKB-UniRule"/>
</dbReference>
<dbReference type="GO" id="GO:0016887">
    <property type="term" value="F:ATP hydrolysis activity"/>
    <property type="evidence" value="ECO:0007669"/>
    <property type="project" value="InterPro"/>
</dbReference>
<dbReference type="GO" id="GO:0140662">
    <property type="term" value="F:ATP-dependent protein folding chaperone"/>
    <property type="evidence" value="ECO:0007669"/>
    <property type="project" value="InterPro"/>
</dbReference>
<dbReference type="GO" id="GO:0046983">
    <property type="term" value="F:protein dimerization activity"/>
    <property type="evidence" value="ECO:0007669"/>
    <property type="project" value="InterPro"/>
</dbReference>
<dbReference type="GO" id="GO:0051082">
    <property type="term" value="F:unfolded protein binding"/>
    <property type="evidence" value="ECO:0007669"/>
    <property type="project" value="UniProtKB-UniRule"/>
</dbReference>
<dbReference type="GO" id="GO:0008270">
    <property type="term" value="F:zinc ion binding"/>
    <property type="evidence" value="ECO:0007669"/>
    <property type="project" value="InterPro"/>
</dbReference>
<dbReference type="GO" id="GO:0051301">
    <property type="term" value="P:cell division"/>
    <property type="evidence" value="ECO:0007669"/>
    <property type="project" value="TreeGrafter"/>
</dbReference>
<dbReference type="GO" id="GO:0051603">
    <property type="term" value="P:proteolysis involved in protein catabolic process"/>
    <property type="evidence" value="ECO:0007669"/>
    <property type="project" value="TreeGrafter"/>
</dbReference>
<dbReference type="CDD" id="cd19497">
    <property type="entry name" value="RecA-like_ClpX"/>
    <property type="match status" value="1"/>
</dbReference>
<dbReference type="FunFam" id="1.10.8.60:FF:000002">
    <property type="entry name" value="ATP-dependent Clp protease ATP-binding subunit ClpX"/>
    <property type="match status" value="1"/>
</dbReference>
<dbReference type="FunFam" id="3.40.50.300:FF:000005">
    <property type="entry name" value="ATP-dependent Clp protease ATP-binding subunit ClpX"/>
    <property type="match status" value="1"/>
</dbReference>
<dbReference type="Gene3D" id="1.10.8.60">
    <property type="match status" value="1"/>
</dbReference>
<dbReference type="Gene3D" id="6.20.220.10">
    <property type="entry name" value="ClpX chaperone, C4-type zinc finger domain"/>
    <property type="match status" value="1"/>
</dbReference>
<dbReference type="Gene3D" id="3.40.50.300">
    <property type="entry name" value="P-loop containing nucleotide triphosphate hydrolases"/>
    <property type="match status" value="1"/>
</dbReference>
<dbReference type="HAMAP" id="MF_00175">
    <property type="entry name" value="ClpX"/>
    <property type="match status" value="1"/>
</dbReference>
<dbReference type="InterPro" id="IPR003593">
    <property type="entry name" value="AAA+_ATPase"/>
</dbReference>
<dbReference type="InterPro" id="IPR050052">
    <property type="entry name" value="ATP-dep_Clp_protease_ClpX"/>
</dbReference>
<dbReference type="InterPro" id="IPR003959">
    <property type="entry name" value="ATPase_AAA_core"/>
</dbReference>
<dbReference type="InterPro" id="IPR019489">
    <property type="entry name" value="Clp_ATPase_C"/>
</dbReference>
<dbReference type="InterPro" id="IPR004487">
    <property type="entry name" value="Clp_protease_ATP-bd_su_ClpX"/>
</dbReference>
<dbReference type="InterPro" id="IPR046425">
    <property type="entry name" value="ClpX_bact"/>
</dbReference>
<dbReference type="InterPro" id="IPR027417">
    <property type="entry name" value="P-loop_NTPase"/>
</dbReference>
<dbReference type="InterPro" id="IPR010603">
    <property type="entry name" value="Znf_CppX_C4"/>
</dbReference>
<dbReference type="InterPro" id="IPR038366">
    <property type="entry name" value="Znf_CppX_C4_sf"/>
</dbReference>
<dbReference type="NCBIfam" id="TIGR00382">
    <property type="entry name" value="clpX"/>
    <property type="match status" value="1"/>
</dbReference>
<dbReference type="NCBIfam" id="NF003745">
    <property type="entry name" value="PRK05342.1"/>
    <property type="match status" value="1"/>
</dbReference>
<dbReference type="PANTHER" id="PTHR48102:SF7">
    <property type="entry name" value="ATP-DEPENDENT CLP PROTEASE ATP-BINDING SUBUNIT CLPX-LIKE, MITOCHONDRIAL"/>
    <property type="match status" value="1"/>
</dbReference>
<dbReference type="PANTHER" id="PTHR48102">
    <property type="entry name" value="ATP-DEPENDENT CLP PROTEASE ATP-BINDING SUBUNIT CLPX-LIKE, MITOCHONDRIAL-RELATED"/>
    <property type="match status" value="1"/>
</dbReference>
<dbReference type="Pfam" id="PF07724">
    <property type="entry name" value="AAA_2"/>
    <property type="match status" value="1"/>
</dbReference>
<dbReference type="Pfam" id="PF10431">
    <property type="entry name" value="ClpB_D2-small"/>
    <property type="match status" value="1"/>
</dbReference>
<dbReference type="Pfam" id="PF06689">
    <property type="entry name" value="zf-C4_ClpX"/>
    <property type="match status" value="1"/>
</dbReference>
<dbReference type="SMART" id="SM00382">
    <property type="entry name" value="AAA"/>
    <property type="match status" value="1"/>
</dbReference>
<dbReference type="SMART" id="SM01086">
    <property type="entry name" value="ClpB_D2-small"/>
    <property type="match status" value="1"/>
</dbReference>
<dbReference type="SMART" id="SM00994">
    <property type="entry name" value="zf-C4_ClpX"/>
    <property type="match status" value="1"/>
</dbReference>
<dbReference type="SUPFAM" id="SSF57716">
    <property type="entry name" value="Glucocorticoid receptor-like (DNA-binding domain)"/>
    <property type="match status" value="1"/>
</dbReference>
<dbReference type="SUPFAM" id="SSF52540">
    <property type="entry name" value="P-loop containing nucleoside triphosphate hydrolases"/>
    <property type="match status" value="1"/>
</dbReference>
<dbReference type="PROSITE" id="PS51902">
    <property type="entry name" value="CLPX_ZB"/>
    <property type="match status" value="1"/>
</dbReference>
<comment type="function">
    <text evidence="1">ATP-dependent specificity component of the Clp protease. It directs the protease to specific substrates. Can perform chaperone functions in the absence of ClpP.</text>
</comment>
<comment type="subunit">
    <text evidence="1">Component of the ClpX-ClpP complex. Forms a hexameric ring that, in the presence of ATP, binds to fourteen ClpP subunits assembled into a disk-like structure with a central cavity, resembling the structure of eukaryotic proteasomes.</text>
</comment>
<comment type="similarity">
    <text evidence="1">Belongs to the ClpX chaperone family.</text>
</comment>
<proteinExistence type="inferred from homology"/>
<protein>
    <recommendedName>
        <fullName evidence="1">ATP-dependent Clp protease ATP-binding subunit ClpX</fullName>
    </recommendedName>
</protein>
<reference key="1">
    <citation type="journal article" date="2001" name="Proc. Natl. Acad. Sci. U.S.A.">
        <title>Complete genomic sequence of Pasteurella multocida Pm70.</title>
        <authorList>
            <person name="May B.J."/>
            <person name="Zhang Q."/>
            <person name="Li L.L."/>
            <person name="Paustian M.L."/>
            <person name="Whittam T.S."/>
            <person name="Kapur V."/>
        </authorList>
    </citation>
    <scope>NUCLEOTIDE SEQUENCE [LARGE SCALE GENOMIC DNA]</scope>
    <source>
        <strain>Pm70</strain>
    </source>
</reference>
<evidence type="ECO:0000255" key="1">
    <source>
        <dbReference type="HAMAP-Rule" id="MF_00175"/>
    </source>
</evidence>
<evidence type="ECO:0000255" key="2">
    <source>
        <dbReference type="PROSITE-ProRule" id="PRU01250"/>
    </source>
</evidence>
<feature type="chain" id="PRO_0000160396" description="ATP-dependent Clp protease ATP-binding subunit ClpX">
    <location>
        <begin position="1"/>
        <end position="411"/>
    </location>
</feature>
<feature type="domain" description="ClpX-type ZB" evidence="2">
    <location>
        <begin position="1"/>
        <end position="50"/>
    </location>
</feature>
<feature type="binding site" evidence="2">
    <location>
        <position position="9"/>
    </location>
    <ligand>
        <name>Zn(2+)</name>
        <dbReference type="ChEBI" id="CHEBI:29105"/>
    </ligand>
</feature>
<feature type="binding site" evidence="2">
    <location>
        <position position="12"/>
    </location>
    <ligand>
        <name>Zn(2+)</name>
        <dbReference type="ChEBI" id="CHEBI:29105"/>
    </ligand>
</feature>
<feature type="binding site" evidence="2">
    <location>
        <position position="31"/>
    </location>
    <ligand>
        <name>Zn(2+)</name>
        <dbReference type="ChEBI" id="CHEBI:29105"/>
    </ligand>
</feature>
<feature type="binding site" evidence="2">
    <location>
        <position position="34"/>
    </location>
    <ligand>
        <name>Zn(2+)</name>
        <dbReference type="ChEBI" id="CHEBI:29105"/>
    </ligand>
</feature>
<feature type="binding site" evidence="1">
    <location>
        <begin position="116"/>
        <end position="123"/>
    </location>
    <ligand>
        <name>ATP</name>
        <dbReference type="ChEBI" id="CHEBI:30616"/>
    </ligand>
</feature>
<keyword id="KW-0067">ATP-binding</keyword>
<keyword id="KW-0143">Chaperone</keyword>
<keyword id="KW-0479">Metal-binding</keyword>
<keyword id="KW-0547">Nucleotide-binding</keyword>
<keyword id="KW-1185">Reference proteome</keyword>
<keyword id="KW-0862">Zinc</keyword>
<accession>P57981</accession>
<organism>
    <name type="scientific">Pasteurella multocida (strain Pm70)</name>
    <dbReference type="NCBI Taxonomy" id="272843"/>
    <lineage>
        <taxon>Bacteria</taxon>
        <taxon>Pseudomonadati</taxon>
        <taxon>Pseudomonadota</taxon>
        <taxon>Gammaproteobacteria</taxon>
        <taxon>Pasteurellales</taxon>
        <taxon>Pasteurellaceae</taxon>
        <taxon>Pasteurella</taxon>
    </lineage>
</organism>